<keyword id="KW-0560">Oxidoreductase</keyword>
<keyword id="KW-1185">Reference proteome</keyword>
<evidence type="ECO:0000255" key="1">
    <source>
        <dbReference type="HAMAP-Rule" id="MF_01401"/>
    </source>
</evidence>
<proteinExistence type="inferred from homology"/>
<organism>
    <name type="scientific">Salinispora tropica (strain ATCC BAA-916 / DSM 44818 / JCM 13857 / NBRC 105044 / CNB-440)</name>
    <dbReference type="NCBI Taxonomy" id="369723"/>
    <lineage>
        <taxon>Bacteria</taxon>
        <taxon>Bacillati</taxon>
        <taxon>Actinomycetota</taxon>
        <taxon>Actinomycetes</taxon>
        <taxon>Micromonosporales</taxon>
        <taxon>Micromonosporaceae</taxon>
        <taxon>Salinispora</taxon>
    </lineage>
</organism>
<protein>
    <recommendedName>
        <fullName evidence="1">Peptide methionine sulfoxide reductase MsrA</fullName>
        <shortName evidence="1">Protein-methionine-S-oxide reductase</shortName>
        <ecNumber evidence="1">1.8.4.11</ecNumber>
    </recommendedName>
    <alternativeName>
        <fullName evidence="1">Peptide-methionine (S)-S-oxide reductase</fullName>
        <shortName evidence="1">Peptide Met(O) reductase</shortName>
    </alternativeName>
</protein>
<comment type="function">
    <text evidence="1">Has an important function as a repair enzyme for proteins that have been inactivated by oxidation. Catalyzes the reversible oxidation-reduction of methionine sulfoxide in proteins to methionine.</text>
</comment>
<comment type="catalytic activity">
    <reaction evidence="1">
        <text>L-methionyl-[protein] + [thioredoxin]-disulfide + H2O = L-methionyl-(S)-S-oxide-[protein] + [thioredoxin]-dithiol</text>
        <dbReference type="Rhea" id="RHEA:14217"/>
        <dbReference type="Rhea" id="RHEA-COMP:10698"/>
        <dbReference type="Rhea" id="RHEA-COMP:10700"/>
        <dbReference type="Rhea" id="RHEA-COMP:12313"/>
        <dbReference type="Rhea" id="RHEA-COMP:12315"/>
        <dbReference type="ChEBI" id="CHEBI:15377"/>
        <dbReference type="ChEBI" id="CHEBI:16044"/>
        <dbReference type="ChEBI" id="CHEBI:29950"/>
        <dbReference type="ChEBI" id="CHEBI:44120"/>
        <dbReference type="ChEBI" id="CHEBI:50058"/>
        <dbReference type="EC" id="1.8.4.11"/>
    </reaction>
</comment>
<comment type="catalytic activity">
    <reaction evidence="1">
        <text>[thioredoxin]-disulfide + L-methionine + H2O = L-methionine (S)-S-oxide + [thioredoxin]-dithiol</text>
        <dbReference type="Rhea" id="RHEA:19993"/>
        <dbReference type="Rhea" id="RHEA-COMP:10698"/>
        <dbReference type="Rhea" id="RHEA-COMP:10700"/>
        <dbReference type="ChEBI" id="CHEBI:15377"/>
        <dbReference type="ChEBI" id="CHEBI:29950"/>
        <dbReference type="ChEBI" id="CHEBI:50058"/>
        <dbReference type="ChEBI" id="CHEBI:57844"/>
        <dbReference type="ChEBI" id="CHEBI:58772"/>
        <dbReference type="EC" id="1.8.4.11"/>
    </reaction>
</comment>
<comment type="similarity">
    <text evidence="1">Belongs to the MsrA Met sulfoxide reductase family.</text>
</comment>
<gene>
    <name evidence="1" type="primary">msrA</name>
    <name type="ordered locus">Strop_0918</name>
</gene>
<accession>A4X3E5</accession>
<dbReference type="EC" id="1.8.4.11" evidence="1"/>
<dbReference type="EMBL" id="CP000667">
    <property type="protein sequence ID" value="ABP53395.1"/>
    <property type="molecule type" value="Genomic_DNA"/>
</dbReference>
<dbReference type="RefSeq" id="WP_011904829.1">
    <property type="nucleotide sequence ID" value="NC_009380.1"/>
</dbReference>
<dbReference type="SMR" id="A4X3E5"/>
<dbReference type="STRING" id="369723.Strop_0918"/>
<dbReference type="KEGG" id="stp:Strop_0918"/>
<dbReference type="PATRIC" id="fig|369723.5.peg.936"/>
<dbReference type="eggNOG" id="COG0225">
    <property type="taxonomic scope" value="Bacteria"/>
</dbReference>
<dbReference type="HOGENOM" id="CLU_031040_10_3_11"/>
<dbReference type="Proteomes" id="UP000000235">
    <property type="component" value="Chromosome"/>
</dbReference>
<dbReference type="GO" id="GO:0005737">
    <property type="term" value="C:cytoplasm"/>
    <property type="evidence" value="ECO:0007669"/>
    <property type="project" value="TreeGrafter"/>
</dbReference>
<dbReference type="GO" id="GO:0036456">
    <property type="term" value="F:L-methionine-(S)-S-oxide reductase activity"/>
    <property type="evidence" value="ECO:0007669"/>
    <property type="project" value="TreeGrafter"/>
</dbReference>
<dbReference type="GO" id="GO:0008113">
    <property type="term" value="F:peptide-methionine (S)-S-oxide reductase activity"/>
    <property type="evidence" value="ECO:0007669"/>
    <property type="project" value="UniProtKB-UniRule"/>
</dbReference>
<dbReference type="GO" id="GO:0034599">
    <property type="term" value="P:cellular response to oxidative stress"/>
    <property type="evidence" value="ECO:0007669"/>
    <property type="project" value="TreeGrafter"/>
</dbReference>
<dbReference type="GO" id="GO:0036211">
    <property type="term" value="P:protein modification process"/>
    <property type="evidence" value="ECO:0007669"/>
    <property type="project" value="UniProtKB-UniRule"/>
</dbReference>
<dbReference type="FunFam" id="3.30.1060.10:FF:000001">
    <property type="entry name" value="Peptide methionine sulfoxide reductase MsrA"/>
    <property type="match status" value="1"/>
</dbReference>
<dbReference type="Gene3D" id="3.30.1060.10">
    <property type="entry name" value="Peptide methionine sulphoxide reductase MsrA"/>
    <property type="match status" value="1"/>
</dbReference>
<dbReference type="HAMAP" id="MF_01401">
    <property type="entry name" value="MsrA"/>
    <property type="match status" value="1"/>
</dbReference>
<dbReference type="InterPro" id="IPR002569">
    <property type="entry name" value="Met_Sox_Rdtase_MsrA_dom"/>
</dbReference>
<dbReference type="InterPro" id="IPR036509">
    <property type="entry name" value="Met_Sox_Rdtase_MsrA_sf"/>
</dbReference>
<dbReference type="InterPro" id="IPR050162">
    <property type="entry name" value="MsrA_MetSO_reductase"/>
</dbReference>
<dbReference type="NCBIfam" id="TIGR00401">
    <property type="entry name" value="msrA"/>
    <property type="match status" value="1"/>
</dbReference>
<dbReference type="PANTHER" id="PTHR42799">
    <property type="entry name" value="MITOCHONDRIAL PEPTIDE METHIONINE SULFOXIDE REDUCTASE"/>
    <property type="match status" value="1"/>
</dbReference>
<dbReference type="PANTHER" id="PTHR42799:SF2">
    <property type="entry name" value="MITOCHONDRIAL PEPTIDE METHIONINE SULFOXIDE REDUCTASE"/>
    <property type="match status" value="1"/>
</dbReference>
<dbReference type="Pfam" id="PF01625">
    <property type="entry name" value="PMSR"/>
    <property type="match status" value="1"/>
</dbReference>
<dbReference type="SUPFAM" id="SSF55068">
    <property type="entry name" value="Peptide methionine sulfoxide reductase"/>
    <property type="match status" value="1"/>
</dbReference>
<sequence>MFLRRTKAQLISPEEALPGRPVATPVTEPHEVLGTPLTGPFPEGTAVAVFGMGCFWGAERLFWTLPGVLTTSVGYAGGYTPNPSYDEVCSGRTGHAEVVHVRYDPTKITYEDLLKVFWENHDPTQGMRQGNDVGTQYRSAIYPTTDEQLTTARASRDAFAPVVARAGKGEITTEISPLGDYYLAEGYHQQYLAPTKNPGGYCNHGPNGLSCPVGVARTTD</sequence>
<feature type="chain" id="PRO_1000145437" description="Peptide methionine sulfoxide reductase MsrA">
    <location>
        <begin position="1"/>
        <end position="220"/>
    </location>
</feature>
<feature type="active site" evidence="1">
    <location>
        <position position="54"/>
    </location>
</feature>
<reference key="1">
    <citation type="journal article" date="2007" name="Proc. Natl. Acad. Sci. U.S.A.">
        <title>Genome sequencing reveals complex secondary metabolome in the marine actinomycete Salinispora tropica.</title>
        <authorList>
            <person name="Udwary D.W."/>
            <person name="Zeigler L."/>
            <person name="Asolkar R.N."/>
            <person name="Singan V."/>
            <person name="Lapidus A."/>
            <person name="Fenical W."/>
            <person name="Jensen P.R."/>
            <person name="Moore B.S."/>
        </authorList>
    </citation>
    <scope>NUCLEOTIDE SEQUENCE [LARGE SCALE GENOMIC DNA]</scope>
    <source>
        <strain>ATCC BAA-916 / DSM 44818 / JCM 13857 / NBRC 105044 / CNB-440</strain>
    </source>
</reference>
<name>MSRA_SALTO</name>